<gene>
    <name type="primary">PPE10</name>
    <name type="ordered locus">Rv0442c</name>
    <name type="ORF">MTV037.06c</name>
</gene>
<protein>
    <recommendedName>
        <fullName evidence="4">PPE family protein PPE10</fullName>
    </recommendedName>
</protein>
<keyword id="KW-1185">Reference proteome</keyword>
<keyword id="KW-0964">Secreted</keyword>
<accession>P9WI41</accession>
<accession>L0T6H1</accession>
<accession>O53727</accession>
<accession>P42611</accession>
<dbReference type="EMBL" id="M15467">
    <property type="protein sequence ID" value="AAA88235.1"/>
    <property type="status" value="ALT_INIT"/>
    <property type="molecule type" value="Genomic_DNA"/>
</dbReference>
<dbReference type="EMBL" id="AL123456">
    <property type="protein sequence ID" value="CCP43173.1"/>
    <property type="molecule type" value="Genomic_DNA"/>
</dbReference>
<dbReference type="PIR" id="C70830">
    <property type="entry name" value="C70830"/>
</dbReference>
<dbReference type="RefSeq" id="WP_003402239.1">
    <property type="nucleotide sequence ID" value="NZ_NVQJ01000002.1"/>
</dbReference>
<dbReference type="RefSeq" id="YP_177726.2">
    <property type="nucleotide sequence ID" value="NC_000962.3"/>
</dbReference>
<dbReference type="SMR" id="P9WI41"/>
<dbReference type="STRING" id="83332.Rv0442c"/>
<dbReference type="PaxDb" id="83332-Rv0442c"/>
<dbReference type="DNASU" id="886340"/>
<dbReference type="GeneID" id="886340"/>
<dbReference type="KEGG" id="mtu:Rv0442c"/>
<dbReference type="KEGG" id="mtv:RVBD_0442c"/>
<dbReference type="TubercuList" id="Rv0442c"/>
<dbReference type="eggNOG" id="COG5651">
    <property type="taxonomic scope" value="Bacteria"/>
</dbReference>
<dbReference type="InParanoid" id="P9WI41"/>
<dbReference type="OrthoDB" id="4749881at2"/>
<dbReference type="Proteomes" id="UP000001584">
    <property type="component" value="Chromosome"/>
</dbReference>
<dbReference type="GO" id="GO:0005576">
    <property type="term" value="C:extracellular region"/>
    <property type="evidence" value="ECO:0007669"/>
    <property type="project" value="UniProtKB-SubCell"/>
</dbReference>
<dbReference type="GO" id="GO:0052572">
    <property type="term" value="P:response to host immune response"/>
    <property type="evidence" value="ECO:0000318"/>
    <property type="project" value="GO_Central"/>
</dbReference>
<dbReference type="GO" id="GO:0042783">
    <property type="term" value="P:symbiont-mediated evasion of host immune response"/>
    <property type="evidence" value="ECO:0000315"/>
    <property type="project" value="MTBBASE"/>
</dbReference>
<dbReference type="FunFam" id="1.20.1260.20:FF:000001">
    <property type="entry name" value="PPE family protein PPE41"/>
    <property type="match status" value="1"/>
</dbReference>
<dbReference type="Gene3D" id="1.20.1260.20">
    <property type="entry name" value="PPE superfamily"/>
    <property type="match status" value="1"/>
</dbReference>
<dbReference type="InterPro" id="IPR002989">
    <property type="entry name" value="Mycobac_pentapep"/>
</dbReference>
<dbReference type="InterPro" id="IPR000030">
    <property type="entry name" value="PPE_dom"/>
</dbReference>
<dbReference type="InterPro" id="IPR038332">
    <property type="entry name" value="PPE_sf"/>
</dbReference>
<dbReference type="PANTHER" id="PTHR46766">
    <property type="entry name" value="GLUTAMINE-RICH PROTEIN 2"/>
    <property type="match status" value="1"/>
</dbReference>
<dbReference type="PANTHER" id="PTHR46766:SF1">
    <property type="entry name" value="GLUTAMINE-RICH PROTEIN 2"/>
    <property type="match status" value="1"/>
</dbReference>
<dbReference type="Pfam" id="PF01469">
    <property type="entry name" value="Pentapeptide_2"/>
    <property type="match status" value="2"/>
</dbReference>
<dbReference type="Pfam" id="PF00823">
    <property type="entry name" value="PPE"/>
    <property type="match status" value="1"/>
</dbReference>
<dbReference type="SUPFAM" id="SSF140459">
    <property type="entry name" value="PE/PPE dimer-like"/>
    <property type="match status" value="1"/>
</dbReference>
<feature type="chain" id="PRO_0000217843" description="PPE family protein PPE10">
    <location>
        <begin position="1"/>
        <end position="487"/>
    </location>
</feature>
<feature type="region of interest" description="Disordered" evidence="2">
    <location>
        <begin position="398"/>
        <end position="487"/>
    </location>
</feature>
<feature type="compositionally biased region" description="Low complexity" evidence="2">
    <location>
        <begin position="398"/>
        <end position="424"/>
    </location>
</feature>
<feature type="compositionally biased region" description="Polar residues" evidence="2">
    <location>
        <begin position="428"/>
        <end position="446"/>
    </location>
</feature>
<feature type="sequence conflict" description="In Ref. 1; AAA88235." evidence="4" ref="1">
    <original>I</original>
    <variation>T</variation>
    <location>
        <position position="96"/>
    </location>
</feature>
<feature type="sequence conflict" description="In Ref. 1." evidence="4" ref="1">
    <original>G</original>
    <variation>GNNNIG</variation>
    <location>
        <position position="211"/>
    </location>
</feature>
<organism>
    <name type="scientific">Mycobacterium tuberculosis (strain ATCC 25618 / H37Rv)</name>
    <dbReference type="NCBI Taxonomy" id="83332"/>
    <lineage>
        <taxon>Bacteria</taxon>
        <taxon>Bacillati</taxon>
        <taxon>Actinomycetota</taxon>
        <taxon>Actinomycetes</taxon>
        <taxon>Mycobacteriales</taxon>
        <taxon>Mycobacteriaceae</taxon>
        <taxon>Mycobacterium</taxon>
        <taxon>Mycobacterium tuberculosis complex</taxon>
    </lineage>
</organism>
<name>PPE10_MYCTU</name>
<reference key="1">
    <citation type="journal article" date="1987" name="J. Bacteriol.">
        <title>The 65-kilodalton antigen of Mycobacterium tuberculosis.</title>
        <authorList>
            <person name="Shinnick T.M."/>
        </authorList>
    </citation>
    <scope>NUCLEOTIDE SEQUENCE [GENOMIC DNA]</scope>
    <source>
        <strain>ATCC 35801 / TMC 107 / Erdman</strain>
    </source>
</reference>
<reference key="2">
    <citation type="journal article" date="1998" name="Nature">
        <title>Deciphering the biology of Mycobacterium tuberculosis from the complete genome sequence.</title>
        <authorList>
            <person name="Cole S.T."/>
            <person name="Brosch R."/>
            <person name="Parkhill J."/>
            <person name="Garnier T."/>
            <person name="Churcher C.M."/>
            <person name="Harris D.E."/>
            <person name="Gordon S.V."/>
            <person name="Eiglmeier K."/>
            <person name="Gas S."/>
            <person name="Barry C.E. III"/>
            <person name="Tekaia F."/>
            <person name="Badcock K."/>
            <person name="Basham D."/>
            <person name="Brown D."/>
            <person name="Chillingworth T."/>
            <person name="Connor R."/>
            <person name="Davies R.M."/>
            <person name="Devlin K."/>
            <person name="Feltwell T."/>
            <person name="Gentles S."/>
            <person name="Hamlin N."/>
            <person name="Holroyd S."/>
            <person name="Hornsby T."/>
            <person name="Jagels K."/>
            <person name="Krogh A."/>
            <person name="McLean J."/>
            <person name="Moule S."/>
            <person name="Murphy L.D."/>
            <person name="Oliver S."/>
            <person name="Osborne J."/>
            <person name="Quail M.A."/>
            <person name="Rajandream M.A."/>
            <person name="Rogers J."/>
            <person name="Rutter S."/>
            <person name="Seeger K."/>
            <person name="Skelton S."/>
            <person name="Squares S."/>
            <person name="Squares R."/>
            <person name="Sulston J.E."/>
            <person name="Taylor K."/>
            <person name="Whitehead S."/>
            <person name="Barrell B.G."/>
        </authorList>
    </citation>
    <scope>NUCLEOTIDE SEQUENCE [LARGE SCALE GENOMIC DNA]</scope>
    <source>
        <strain>ATCC 25618 / H37Rv</strain>
    </source>
</reference>
<reference key="3">
    <citation type="journal article" date="2009" name="Mol. Microbiol.">
        <title>PPE and PE_PGRS proteins of Mycobacterium marinum are transported via the type VII secretion system ESX-5.</title>
        <authorList>
            <person name="Abdallah A.M."/>
            <person name="Verboom T."/>
            <person name="Weerdenburg E.M."/>
            <person name="Gey van Pittius N.C."/>
            <person name="Mahasha P.W."/>
            <person name="Jimenez C."/>
            <person name="Parra M."/>
            <person name="Cadieux N."/>
            <person name="Brennan M.J."/>
            <person name="Appelmelk B.J."/>
            <person name="Bitter W."/>
        </authorList>
    </citation>
    <scope>SUBCELLULAR LOCATION</scope>
</reference>
<reference key="4">
    <citation type="journal article" date="2011" name="Mol. Cell. Proteomics">
        <title>Proteogenomic analysis of Mycobacterium tuberculosis by high resolution mass spectrometry.</title>
        <authorList>
            <person name="Kelkar D.S."/>
            <person name="Kumar D."/>
            <person name="Kumar P."/>
            <person name="Balakrishnan L."/>
            <person name="Muthusamy B."/>
            <person name="Yadav A.K."/>
            <person name="Shrivastava P."/>
            <person name="Marimuthu A."/>
            <person name="Anand S."/>
            <person name="Sundaram H."/>
            <person name="Kingsbury R."/>
            <person name="Harsha H.C."/>
            <person name="Nair B."/>
            <person name="Prasad T.S."/>
            <person name="Chauhan D.S."/>
            <person name="Katoch K."/>
            <person name="Katoch V.M."/>
            <person name="Kumar P."/>
            <person name="Chaerkady R."/>
            <person name="Ramachandran S."/>
            <person name="Dash D."/>
            <person name="Pandey A."/>
        </authorList>
    </citation>
    <scope>IDENTIFICATION BY MASS SPECTROMETRY [LARGE SCALE ANALYSIS]</scope>
    <source>
        <strain>ATCC 25618 / H37Rv</strain>
    </source>
</reference>
<sequence>MTSPHFAWLPPEINSALMFAGPGSGPLIAAATAWGELAEELLASIASLGSVTSELTSGAWLGPSAAAMMAVATQYLAWLSTAAAQAEQAAAQAMAIATAFEAALAATVQPAVVAANRGLMQLLAATNWFGQNAPALMDVEAAYEQMWALDVAAMAGYHFDASAAVAQLAPWQQVLRNLGIDIGKNGQINLGFGNTGSGNIGNNNIGNNNIGSGNTGTGNIGSGNTGSGNLGLGNLGDGNIGFGNTGSGNIGFGITGDHQMGFGGFNSGSGNIGFGNSGTGNVGLFNSGSGNIGIGNSGSLNSGIGTSGTINAGLGSAGSLNTSFWNAGMQNAALGSAAGSEAALVSSAGYATGGMSTAALSSGILASALGSTGGLQHGLANVLNSGLTNTPVAAPASAPVGGLDSGNPNPGSGSAAAGSGANPGLRSPGTSYPSFVNSGSNDSGLRNTAVREPSTPGSGIPKSNFYPSPDRESAYASPRIGQPVGSE</sequence>
<proteinExistence type="evidence at protein level"/>
<evidence type="ECO:0000250" key="1">
    <source>
        <dbReference type="UniProtKB" id="B2HQQ1"/>
    </source>
</evidence>
<evidence type="ECO:0000256" key="2">
    <source>
        <dbReference type="SAM" id="MobiDB-lite"/>
    </source>
</evidence>
<evidence type="ECO:0000269" key="3">
    <source>
    </source>
</evidence>
<evidence type="ECO:0000305" key="4"/>
<comment type="function">
    <text evidence="1">Plays a major role in the integrity and stability of the capsule.</text>
</comment>
<comment type="subcellular location">
    <subcellularLocation>
        <location evidence="3">Secreted</location>
    </subcellularLocation>
    <text evidence="3">Secreted via the ESX-5 / type VII secretion system (T7SS).</text>
</comment>
<comment type="similarity">
    <text evidence="4">Belongs to the mycobacterial PPE family.</text>
</comment>
<comment type="sequence caution" evidence="4">
    <conflict type="erroneous initiation">
        <sequence resource="EMBL-CDS" id="AAA88235"/>
    </conflict>
</comment>